<name>MURG_CUPPJ</name>
<gene>
    <name evidence="1" type="primary">murG</name>
    <name type="ordered locus">Reut_A2979</name>
</gene>
<comment type="function">
    <text evidence="1">Cell wall formation. Catalyzes the transfer of a GlcNAc subunit on undecaprenyl-pyrophosphoryl-MurNAc-pentapeptide (lipid intermediate I) to form undecaprenyl-pyrophosphoryl-MurNAc-(pentapeptide)GlcNAc (lipid intermediate II).</text>
</comment>
<comment type="catalytic activity">
    <reaction evidence="1">
        <text>di-trans,octa-cis-undecaprenyl diphospho-N-acetyl-alpha-D-muramoyl-L-alanyl-D-glutamyl-meso-2,6-diaminopimeloyl-D-alanyl-D-alanine + UDP-N-acetyl-alpha-D-glucosamine = di-trans,octa-cis-undecaprenyl diphospho-[N-acetyl-alpha-D-glucosaminyl-(1-&gt;4)]-N-acetyl-alpha-D-muramoyl-L-alanyl-D-glutamyl-meso-2,6-diaminopimeloyl-D-alanyl-D-alanine + UDP + H(+)</text>
        <dbReference type="Rhea" id="RHEA:31227"/>
        <dbReference type="ChEBI" id="CHEBI:15378"/>
        <dbReference type="ChEBI" id="CHEBI:57705"/>
        <dbReference type="ChEBI" id="CHEBI:58223"/>
        <dbReference type="ChEBI" id="CHEBI:61387"/>
        <dbReference type="ChEBI" id="CHEBI:61388"/>
        <dbReference type="EC" id="2.4.1.227"/>
    </reaction>
</comment>
<comment type="pathway">
    <text evidence="1">Cell wall biogenesis; peptidoglycan biosynthesis.</text>
</comment>
<comment type="subcellular location">
    <subcellularLocation>
        <location evidence="1">Cell inner membrane</location>
        <topology evidence="1">Peripheral membrane protein</topology>
        <orientation evidence="1">Cytoplasmic side</orientation>
    </subcellularLocation>
</comment>
<comment type="similarity">
    <text evidence="1">Belongs to the glycosyltransferase 28 family. MurG subfamily.</text>
</comment>
<accession>Q46WZ4</accession>
<reference key="1">
    <citation type="journal article" date="2010" name="PLoS ONE">
        <title>The complete multipartite genome sequence of Cupriavidus necator JMP134, a versatile pollutant degrader.</title>
        <authorList>
            <person name="Lykidis A."/>
            <person name="Perez-Pantoja D."/>
            <person name="Ledger T."/>
            <person name="Mavromatis K."/>
            <person name="Anderson I.J."/>
            <person name="Ivanova N.N."/>
            <person name="Hooper S.D."/>
            <person name="Lapidus A."/>
            <person name="Lucas S."/>
            <person name="Gonzalez B."/>
            <person name="Kyrpides N.C."/>
        </authorList>
    </citation>
    <scope>NUCLEOTIDE SEQUENCE [LARGE SCALE GENOMIC DNA]</scope>
    <source>
        <strain>JMP134 / LMG 1197</strain>
    </source>
</reference>
<protein>
    <recommendedName>
        <fullName evidence="1">UDP-N-acetylglucosamine--N-acetylmuramyl-(pentapeptide) pyrophosphoryl-undecaprenol N-acetylglucosamine transferase</fullName>
        <ecNumber evidence="1">2.4.1.227</ecNumber>
    </recommendedName>
    <alternativeName>
        <fullName evidence="1">Undecaprenyl-PP-MurNAc-pentapeptide-UDPGlcNAc GlcNAc transferase</fullName>
    </alternativeName>
</protein>
<proteinExistence type="inferred from homology"/>
<organism>
    <name type="scientific">Cupriavidus pinatubonensis (strain JMP 134 / LMG 1197)</name>
    <name type="common">Cupriavidus necator (strain JMP 134)</name>
    <dbReference type="NCBI Taxonomy" id="264198"/>
    <lineage>
        <taxon>Bacteria</taxon>
        <taxon>Pseudomonadati</taxon>
        <taxon>Pseudomonadota</taxon>
        <taxon>Betaproteobacteria</taxon>
        <taxon>Burkholderiales</taxon>
        <taxon>Burkholderiaceae</taxon>
        <taxon>Cupriavidus</taxon>
    </lineage>
</organism>
<feature type="chain" id="PRO_0000225087" description="UDP-N-acetylglucosamine--N-acetylmuramyl-(pentapeptide) pyrophosphoryl-undecaprenol N-acetylglucosamine transferase">
    <location>
        <begin position="1"/>
        <end position="356"/>
    </location>
</feature>
<feature type="binding site" evidence="1">
    <location>
        <begin position="14"/>
        <end position="16"/>
    </location>
    <ligand>
        <name>UDP-N-acetyl-alpha-D-glucosamine</name>
        <dbReference type="ChEBI" id="CHEBI:57705"/>
    </ligand>
</feature>
<feature type="binding site" evidence="1">
    <location>
        <position position="126"/>
    </location>
    <ligand>
        <name>UDP-N-acetyl-alpha-D-glucosamine</name>
        <dbReference type="ChEBI" id="CHEBI:57705"/>
    </ligand>
</feature>
<feature type="binding site" evidence="1">
    <location>
        <position position="162"/>
    </location>
    <ligand>
        <name>UDP-N-acetyl-alpha-D-glucosamine</name>
        <dbReference type="ChEBI" id="CHEBI:57705"/>
    </ligand>
</feature>
<feature type="binding site" evidence="1">
    <location>
        <position position="190"/>
    </location>
    <ligand>
        <name>UDP-N-acetyl-alpha-D-glucosamine</name>
        <dbReference type="ChEBI" id="CHEBI:57705"/>
    </ligand>
</feature>
<feature type="binding site" evidence="1">
    <location>
        <position position="244"/>
    </location>
    <ligand>
        <name>UDP-N-acetyl-alpha-D-glucosamine</name>
        <dbReference type="ChEBI" id="CHEBI:57705"/>
    </ligand>
</feature>
<feature type="binding site" evidence="1">
    <location>
        <position position="289"/>
    </location>
    <ligand>
        <name>UDP-N-acetyl-alpha-D-glucosamine</name>
        <dbReference type="ChEBI" id="CHEBI:57705"/>
    </ligand>
</feature>
<keyword id="KW-0131">Cell cycle</keyword>
<keyword id="KW-0132">Cell division</keyword>
<keyword id="KW-0997">Cell inner membrane</keyword>
<keyword id="KW-1003">Cell membrane</keyword>
<keyword id="KW-0133">Cell shape</keyword>
<keyword id="KW-0961">Cell wall biogenesis/degradation</keyword>
<keyword id="KW-0328">Glycosyltransferase</keyword>
<keyword id="KW-0472">Membrane</keyword>
<keyword id="KW-0573">Peptidoglycan synthesis</keyword>
<keyword id="KW-0808">Transferase</keyword>
<evidence type="ECO:0000255" key="1">
    <source>
        <dbReference type="HAMAP-Rule" id="MF_00033"/>
    </source>
</evidence>
<dbReference type="EC" id="2.4.1.227" evidence="1"/>
<dbReference type="EMBL" id="CP000090">
    <property type="protein sequence ID" value="AAZ62339.1"/>
    <property type="molecule type" value="Genomic_DNA"/>
</dbReference>
<dbReference type="SMR" id="Q46WZ4"/>
<dbReference type="STRING" id="264198.Reut_A2979"/>
<dbReference type="CAZy" id="GT28">
    <property type="family name" value="Glycosyltransferase Family 28"/>
</dbReference>
<dbReference type="KEGG" id="reu:Reut_A2979"/>
<dbReference type="eggNOG" id="COG0707">
    <property type="taxonomic scope" value="Bacteria"/>
</dbReference>
<dbReference type="HOGENOM" id="CLU_037404_2_0_4"/>
<dbReference type="OrthoDB" id="9808936at2"/>
<dbReference type="UniPathway" id="UPA00219"/>
<dbReference type="GO" id="GO:0005886">
    <property type="term" value="C:plasma membrane"/>
    <property type="evidence" value="ECO:0007669"/>
    <property type="project" value="UniProtKB-SubCell"/>
</dbReference>
<dbReference type="GO" id="GO:0051991">
    <property type="term" value="F:UDP-N-acetyl-D-glucosamine:N-acetylmuramoyl-L-alanyl-D-glutamyl-meso-2,6-diaminopimelyl-D-alanyl-D-alanine-diphosphoundecaprenol 4-beta-N-acetylglucosaminlytransferase activity"/>
    <property type="evidence" value="ECO:0007669"/>
    <property type="project" value="RHEA"/>
</dbReference>
<dbReference type="GO" id="GO:0050511">
    <property type="term" value="F:undecaprenyldiphospho-muramoylpentapeptide beta-N-acetylglucosaminyltransferase activity"/>
    <property type="evidence" value="ECO:0007669"/>
    <property type="project" value="UniProtKB-UniRule"/>
</dbReference>
<dbReference type="GO" id="GO:0005975">
    <property type="term" value="P:carbohydrate metabolic process"/>
    <property type="evidence" value="ECO:0007669"/>
    <property type="project" value="InterPro"/>
</dbReference>
<dbReference type="GO" id="GO:0051301">
    <property type="term" value="P:cell division"/>
    <property type="evidence" value="ECO:0007669"/>
    <property type="project" value="UniProtKB-KW"/>
</dbReference>
<dbReference type="GO" id="GO:0071555">
    <property type="term" value="P:cell wall organization"/>
    <property type="evidence" value="ECO:0007669"/>
    <property type="project" value="UniProtKB-KW"/>
</dbReference>
<dbReference type="GO" id="GO:0030259">
    <property type="term" value="P:lipid glycosylation"/>
    <property type="evidence" value="ECO:0007669"/>
    <property type="project" value="UniProtKB-UniRule"/>
</dbReference>
<dbReference type="GO" id="GO:0009252">
    <property type="term" value="P:peptidoglycan biosynthetic process"/>
    <property type="evidence" value="ECO:0007669"/>
    <property type="project" value="UniProtKB-UniRule"/>
</dbReference>
<dbReference type="GO" id="GO:0008360">
    <property type="term" value="P:regulation of cell shape"/>
    <property type="evidence" value="ECO:0007669"/>
    <property type="project" value="UniProtKB-KW"/>
</dbReference>
<dbReference type="CDD" id="cd03785">
    <property type="entry name" value="GT28_MurG"/>
    <property type="match status" value="1"/>
</dbReference>
<dbReference type="Gene3D" id="3.40.50.2000">
    <property type="entry name" value="Glycogen Phosphorylase B"/>
    <property type="match status" value="2"/>
</dbReference>
<dbReference type="HAMAP" id="MF_00033">
    <property type="entry name" value="MurG"/>
    <property type="match status" value="1"/>
</dbReference>
<dbReference type="InterPro" id="IPR006009">
    <property type="entry name" value="GlcNAc_MurG"/>
</dbReference>
<dbReference type="InterPro" id="IPR007235">
    <property type="entry name" value="Glyco_trans_28_C"/>
</dbReference>
<dbReference type="InterPro" id="IPR004276">
    <property type="entry name" value="GlycoTrans_28_N"/>
</dbReference>
<dbReference type="NCBIfam" id="TIGR01133">
    <property type="entry name" value="murG"/>
    <property type="match status" value="1"/>
</dbReference>
<dbReference type="PANTHER" id="PTHR21015:SF22">
    <property type="entry name" value="GLYCOSYLTRANSFERASE"/>
    <property type="match status" value="1"/>
</dbReference>
<dbReference type="PANTHER" id="PTHR21015">
    <property type="entry name" value="UDP-N-ACETYLGLUCOSAMINE--N-ACETYLMURAMYL-(PENTAPEPTIDE) PYROPHOSPHORYL-UNDECAPRENOL N-ACETYLGLUCOSAMINE TRANSFERASE 1"/>
    <property type="match status" value="1"/>
</dbReference>
<dbReference type="Pfam" id="PF04101">
    <property type="entry name" value="Glyco_tran_28_C"/>
    <property type="match status" value="1"/>
</dbReference>
<dbReference type="Pfam" id="PF03033">
    <property type="entry name" value="Glyco_transf_28"/>
    <property type="match status" value="1"/>
</dbReference>
<dbReference type="SUPFAM" id="SSF53756">
    <property type="entry name" value="UDP-Glycosyltransferase/glycogen phosphorylase"/>
    <property type="match status" value="1"/>
</dbReference>
<sequence>MTQQRTLLVMAGGTGGHVFPGLAVAHALREQGWKVVWLGNRTGMEATLVPKHDIPMEFIQFGGLRGKGLVTKFLLPLNLLRAFWQSLGALRRVRPSVVLGMGGYITFPAGMMASLLGRPLVLHEQNSIAGLANKVLAKVADRVLCAFPDTLPDSEWTGNPVREELAHMAEPEARYDIRTGPLNVLVVGGSLGAAALNDVVPKAIAMLPEAQRPVVTHQAGAKQIDKLRANYAAAQVSAQTLPFIDDMAKAYADADLVICRAGAMTVSEVAAAGVAALFVPFPHAVDDHQTTNAEFLSKQGAALLVQQQELTADGLAKTIAGLNRPQLKEMARLARGLAKPEATRRVAEVCSQMARD</sequence>